<accession>Q3SRS3</accession>
<comment type="function">
    <text evidence="1">Functions in the N-end rule pathway of protein degradation where it conjugates Leu, Phe and, less efficiently, Met from aminoacyl-tRNAs to the N-termini of proteins containing an N-terminal arginine or lysine.</text>
</comment>
<comment type="catalytic activity">
    <reaction evidence="1">
        <text>N-terminal L-lysyl-[protein] + L-leucyl-tRNA(Leu) = N-terminal L-leucyl-L-lysyl-[protein] + tRNA(Leu) + H(+)</text>
        <dbReference type="Rhea" id="RHEA:12340"/>
        <dbReference type="Rhea" id="RHEA-COMP:9613"/>
        <dbReference type="Rhea" id="RHEA-COMP:9622"/>
        <dbReference type="Rhea" id="RHEA-COMP:12670"/>
        <dbReference type="Rhea" id="RHEA-COMP:12671"/>
        <dbReference type="ChEBI" id="CHEBI:15378"/>
        <dbReference type="ChEBI" id="CHEBI:65249"/>
        <dbReference type="ChEBI" id="CHEBI:78442"/>
        <dbReference type="ChEBI" id="CHEBI:78494"/>
        <dbReference type="ChEBI" id="CHEBI:133043"/>
        <dbReference type="EC" id="2.3.2.6"/>
    </reaction>
</comment>
<comment type="catalytic activity">
    <reaction evidence="1">
        <text>N-terminal L-arginyl-[protein] + L-leucyl-tRNA(Leu) = N-terminal L-leucyl-L-arginyl-[protein] + tRNA(Leu) + H(+)</text>
        <dbReference type="Rhea" id="RHEA:50416"/>
        <dbReference type="Rhea" id="RHEA-COMP:9613"/>
        <dbReference type="Rhea" id="RHEA-COMP:9622"/>
        <dbReference type="Rhea" id="RHEA-COMP:12672"/>
        <dbReference type="Rhea" id="RHEA-COMP:12673"/>
        <dbReference type="ChEBI" id="CHEBI:15378"/>
        <dbReference type="ChEBI" id="CHEBI:64719"/>
        <dbReference type="ChEBI" id="CHEBI:78442"/>
        <dbReference type="ChEBI" id="CHEBI:78494"/>
        <dbReference type="ChEBI" id="CHEBI:133044"/>
        <dbReference type="EC" id="2.3.2.6"/>
    </reaction>
</comment>
<comment type="catalytic activity">
    <reaction evidence="1">
        <text>L-phenylalanyl-tRNA(Phe) + an N-terminal L-alpha-aminoacyl-[protein] = an N-terminal L-phenylalanyl-L-alpha-aminoacyl-[protein] + tRNA(Phe)</text>
        <dbReference type="Rhea" id="RHEA:43632"/>
        <dbReference type="Rhea" id="RHEA-COMP:9668"/>
        <dbReference type="Rhea" id="RHEA-COMP:9699"/>
        <dbReference type="Rhea" id="RHEA-COMP:10636"/>
        <dbReference type="Rhea" id="RHEA-COMP:10637"/>
        <dbReference type="ChEBI" id="CHEBI:78442"/>
        <dbReference type="ChEBI" id="CHEBI:78531"/>
        <dbReference type="ChEBI" id="CHEBI:78597"/>
        <dbReference type="ChEBI" id="CHEBI:83561"/>
        <dbReference type="EC" id="2.3.2.6"/>
    </reaction>
</comment>
<comment type="subcellular location">
    <subcellularLocation>
        <location evidence="1">Cytoplasm</location>
    </subcellularLocation>
</comment>
<comment type="similarity">
    <text evidence="1">Belongs to the L/F-transferase family.</text>
</comment>
<reference key="1">
    <citation type="journal article" date="2006" name="Appl. Environ. Microbiol.">
        <title>Genome sequence of the chemolithoautotrophic nitrite-oxidizing bacterium Nitrobacter winogradskyi Nb-255.</title>
        <authorList>
            <person name="Starkenburg S.R."/>
            <person name="Chain P.S.G."/>
            <person name="Sayavedra-Soto L.A."/>
            <person name="Hauser L."/>
            <person name="Land M.L."/>
            <person name="Larimer F.W."/>
            <person name="Malfatti S.A."/>
            <person name="Klotz M.G."/>
            <person name="Bottomley P.J."/>
            <person name="Arp D.J."/>
            <person name="Hickey W.J."/>
        </authorList>
    </citation>
    <scope>NUCLEOTIDE SEQUENCE [LARGE SCALE GENOMIC DNA]</scope>
    <source>
        <strain>ATCC 25391 / DSM 10237 / CIP 104748 / NCIMB 11846 / Nb-255</strain>
    </source>
</reference>
<evidence type="ECO:0000255" key="1">
    <source>
        <dbReference type="HAMAP-Rule" id="MF_00688"/>
    </source>
</evidence>
<keyword id="KW-0012">Acyltransferase</keyword>
<keyword id="KW-0963">Cytoplasm</keyword>
<keyword id="KW-1185">Reference proteome</keyword>
<keyword id="KW-0808">Transferase</keyword>
<organism>
    <name type="scientific">Nitrobacter winogradskyi (strain ATCC 25391 / DSM 10237 / CIP 104748 / NCIMB 11846 / Nb-255)</name>
    <dbReference type="NCBI Taxonomy" id="323098"/>
    <lineage>
        <taxon>Bacteria</taxon>
        <taxon>Pseudomonadati</taxon>
        <taxon>Pseudomonadota</taxon>
        <taxon>Alphaproteobacteria</taxon>
        <taxon>Hyphomicrobiales</taxon>
        <taxon>Nitrobacteraceae</taxon>
        <taxon>Nitrobacter</taxon>
    </lineage>
</organism>
<protein>
    <recommendedName>
        <fullName evidence="1">Leucyl/phenylalanyl-tRNA--protein transferase</fullName>
        <ecNumber evidence="1">2.3.2.6</ecNumber>
    </recommendedName>
    <alternativeName>
        <fullName evidence="1">L/F-transferase</fullName>
    </alternativeName>
    <alternativeName>
        <fullName evidence="1">Leucyltransferase</fullName>
    </alternativeName>
    <alternativeName>
        <fullName evidence="1">Phenyalanyltransferase</fullName>
    </alternativeName>
</protein>
<name>LFTR_NITWN</name>
<dbReference type="EC" id="2.3.2.6" evidence="1"/>
<dbReference type="EMBL" id="CP000115">
    <property type="protein sequence ID" value="ABA05018.1"/>
    <property type="molecule type" value="Genomic_DNA"/>
</dbReference>
<dbReference type="RefSeq" id="WP_011315014.1">
    <property type="nucleotide sequence ID" value="NC_007406.1"/>
</dbReference>
<dbReference type="SMR" id="Q3SRS3"/>
<dbReference type="STRING" id="323098.Nwi_1757"/>
<dbReference type="KEGG" id="nwi:Nwi_1757"/>
<dbReference type="eggNOG" id="COG2360">
    <property type="taxonomic scope" value="Bacteria"/>
</dbReference>
<dbReference type="HOGENOM" id="CLU_075045_1_1_5"/>
<dbReference type="OrthoDB" id="9790282at2"/>
<dbReference type="Proteomes" id="UP000002531">
    <property type="component" value="Chromosome"/>
</dbReference>
<dbReference type="GO" id="GO:0005737">
    <property type="term" value="C:cytoplasm"/>
    <property type="evidence" value="ECO:0007669"/>
    <property type="project" value="UniProtKB-SubCell"/>
</dbReference>
<dbReference type="GO" id="GO:0008914">
    <property type="term" value="F:leucyl-tRNA--protein transferase activity"/>
    <property type="evidence" value="ECO:0007669"/>
    <property type="project" value="UniProtKB-UniRule"/>
</dbReference>
<dbReference type="GO" id="GO:0030163">
    <property type="term" value="P:protein catabolic process"/>
    <property type="evidence" value="ECO:0007669"/>
    <property type="project" value="UniProtKB-UniRule"/>
</dbReference>
<dbReference type="FunFam" id="3.40.630.70:FF:000001">
    <property type="entry name" value="Leucyl/phenylalanyl-tRNA--protein transferase"/>
    <property type="match status" value="1"/>
</dbReference>
<dbReference type="Gene3D" id="3.40.630.70">
    <property type="entry name" value="Leucyl/phenylalanyl-tRNA-protein transferase, C-terminal domain"/>
    <property type="match status" value="1"/>
</dbReference>
<dbReference type="Gene3D" id="3.30.70.3550">
    <property type="entry name" value="Leucyl/phenylalanyl-tRNA-protein transferase, N-terminal domain"/>
    <property type="match status" value="1"/>
</dbReference>
<dbReference type="HAMAP" id="MF_00688">
    <property type="entry name" value="Leu_Phe_trans"/>
    <property type="match status" value="1"/>
</dbReference>
<dbReference type="InterPro" id="IPR016181">
    <property type="entry name" value="Acyl_CoA_acyltransferase"/>
</dbReference>
<dbReference type="InterPro" id="IPR004616">
    <property type="entry name" value="Leu/Phe-tRNA_Trfase"/>
</dbReference>
<dbReference type="InterPro" id="IPR042203">
    <property type="entry name" value="Leu/Phe-tRNA_Trfase_C"/>
</dbReference>
<dbReference type="InterPro" id="IPR042221">
    <property type="entry name" value="Leu/Phe-tRNA_Trfase_N"/>
</dbReference>
<dbReference type="NCBIfam" id="TIGR00667">
    <property type="entry name" value="aat"/>
    <property type="match status" value="1"/>
</dbReference>
<dbReference type="PANTHER" id="PTHR30098">
    <property type="entry name" value="LEUCYL/PHENYLALANYL-TRNA--PROTEIN TRANSFERASE"/>
    <property type="match status" value="1"/>
</dbReference>
<dbReference type="PANTHER" id="PTHR30098:SF2">
    <property type="entry name" value="LEUCYL_PHENYLALANYL-TRNA--PROTEIN TRANSFERASE"/>
    <property type="match status" value="1"/>
</dbReference>
<dbReference type="Pfam" id="PF03588">
    <property type="entry name" value="Leu_Phe_trans"/>
    <property type="match status" value="1"/>
</dbReference>
<dbReference type="SUPFAM" id="SSF55729">
    <property type="entry name" value="Acyl-CoA N-acyltransferases (Nat)"/>
    <property type="match status" value="1"/>
</dbReference>
<gene>
    <name evidence="1" type="primary">aat</name>
    <name type="ordered locus">Nwi_1757</name>
</gene>
<feature type="chain" id="PRO_0000258069" description="Leucyl/phenylalanyl-tRNA--protein transferase">
    <location>
        <begin position="1"/>
        <end position="225"/>
    </location>
</feature>
<sequence length="225" mass="24882">MSRETASSEITPELLLRAYACGIFPMAESVDDPTLFWVEPKMRGVVPLESFRIPSRLARTVRSDSFTVTVDTAFDAVINGCAAPQPGRNNTWINHRIRELYIGLHELGHCHSVEVWRDNELAGGLYGVRLGRAFFGESMFHVVRDASKVALVHLVARLIAGGFVLLDTQFVTDHLRGFGAIEIPRRRYRALLDVALEGRADFGALPLDRPVPGAEALKAIADRSS</sequence>
<proteinExistence type="inferred from homology"/>